<dbReference type="EC" id="2.5.1.7" evidence="1"/>
<dbReference type="EMBL" id="CP000478">
    <property type="protein sequence ID" value="ABK17402.1"/>
    <property type="molecule type" value="Genomic_DNA"/>
</dbReference>
<dbReference type="RefSeq" id="WP_011698572.1">
    <property type="nucleotide sequence ID" value="NC_008554.1"/>
</dbReference>
<dbReference type="SMR" id="A0LJ00"/>
<dbReference type="FunCoup" id="A0LJ00">
    <property type="interactions" value="474"/>
</dbReference>
<dbReference type="STRING" id="335543.Sfum_1715"/>
<dbReference type="KEGG" id="sfu:Sfum_1715"/>
<dbReference type="eggNOG" id="COG0766">
    <property type="taxonomic scope" value="Bacteria"/>
</dbReference>
<dbReference type="HOGENOM" id="CLU_027387_0_0_7"/>
<dbReference type="InParanoid" id="A0LJ00"/>
<dbReference type="OrthoDB" id="9803760at2"/>
<dbReference type="UniPathway" id="UPA00219"/>
<dbReference type="Proteomes" id="UP000001784">
    <property type="component" value="Chromosome"/>
</dbReference>
<dbReference type="GO" id="GO:0005737">
    <property type="term" value="C:cytoplasm"/>
    <property type="evidence" value="ECO:0007669"/>
    <property type="project" value="UniProtKB-SubCell"/>
</dbReference>
<dbReference type="GO" id="GO:0008760">
    <property type="term" value="F:UDP-N-acetylglucosamine 1-carboxyvinyltransferase activity"/>
    <property type="evidence" value="ECO:0007669"/>
    <property type="project" value="UniProtKB-UniRule"/>
</dbReference>
<dbReference type="GO" id="GO:0051301">
    <property type="term" value="P:cell division"/>
    <property type="evidence" value="ECO:0007669"/>
    <property type="project" value="UniProtKB-KW"/>
</dbReference>
<dbReference type="GO" id="GO:0071555">
    <property type="term" value="P:cell wall organization"/>
    <property type="evidence" value="ECO:0007669"/>
    <property type="project" value="UniProtKB-KW"/>
</dbReference>
<dbReference type="GO" id="GO:0009252">
    <property type="term" value="P:peptidoglycan biosynthetic process"/>
    <property type="evidence" value="ECO:0007669"/>
    <property type="project" value="UniProtKB-UniRule"/>
</dbReference>
<dbReference type="GO" id="GO:0008360">
    <property type="term" value="P:regulation of cell shape"/>
    <property type="evidence" value="ECO:0007669"/>
    <property type="project" value="UniProtKB-KW"/>
</dbReference>
<dbReference type="GO" id="GO:0019277">
    <property type="term" value="P:UDP-N-acetylgalactosamine biosynthetic process"/>
    <property type="evidence" value="ECO:0007669"/>
    <property type="project" value="InterPro"/>
</dbReference>
<dbReference type="CDD" id="cd01555">
    <property type="entry name" value="UdpNAET"/>
    <property type="match status" value="1"/>
</dbReference>
<dbReference type="FunFam" id="3.65.10.10:FF:000001">
    <property type="entry name" value="UDP-N-acetylglucosamine 1-carboxyvinyltransferase"/>
    <property type="match status" value="1"/>
</dbReference>
<dbReference type="Gene3D" id="3.65.10.10">
    <property type="entry name" value="Enolpyruvate transferase domain"/>
    <property type="match status" value="2"/>
</dbReference>
<dbReference type="HAMAP" id="MF_00111">
    <property type="entry name" value="MurA"/>
    <property type="match status" value="1"/>
</dbReference>
<dbReference type="InterPro" id="IPR001986">
    <property type="entry name" value="Enolpyruvate_Tfrase_dom"/>
</dbReference>
<dbReference type="InterPro" id="IPR036968">
    <property type="entry name" value="Enolpyruvate_Tfrase_sf"/>
</dbReference>
<dbReference type="InterPro" id="IPR050068">
    <property type="entry name" value="MurA_subfamily"/>
</dbReference>
<dbReference type="InterPro" id="IPR013792">
    <property type="entry name" value="RNA3'P_cycl/enolpyr_Trfase_a/b"/>
</dbReference>
<dbReference type="InterPro" id="IPR005750">
    <property type="entry name" value="UDP_GlcNAc_COvinyl_MurA"/>
</dbReference>
<dbReference type="NCBIfam" id="TIGR01072">
    <property type="entry name" value="murA"/>
    <property type="match status" value="1"/>
</dbReference>
<dbReference type="NCBIfam" id="NF006873">
    <property type="entry name" value="PRK09369.1"/>
    <property type="match status" value="1"/>
</dbReference>
<dbReference type="PANTHER" id="PTHR43783">
    <property type="entry name" value="UDP-N-ACETYLGLUCOSAMINE 1-CARBOXYVINYLTRANSFERASE"/>
    <property type="match status" value="1"/>
</dbReference>
<dbReference type="PANTHER" id="PTHR43783:SF1">
    <property type="entry name" value="UDP-N-ACETYLGLUCOSAMINE 1-CARBOXYVINYLTRANSFERASE"/>
    <property type="match status" value="1"/>
</dbReference>
<dbReference type="Pfam" id="PF00275">
    <property type="entry name" value="EPSP_synthase"/>
    <property type="match status" value="1"/>
</dbReference>
<dbReference type="SUPFAM" id="SSF55205">
    <property type="entry name" value="EPT/RTPC-like"/>
    <property type="match status" value="1"/>
</dbReference>
<evidence type="ECO:0000255" key="1">
    <source>
        <dbReference type="HAMAP-Rule" id="MF_00111"/>
    </source>
</evidence>
<accession>A0LJ00</accession>
<comment type="function">
    <text evidence="1">Cell wall formation. Adds enolpyruvyl to UDP-N-acetylglucosamine.</text>
</comment>
<comment type="catalytic activity">
    <reaction evidence="1">
        <text>phosphoenolpyruvate + UDP-N-acetyl-alpha-D-glucosamine = UDP-N-acetyl-3-O-(1-carboxyvinyl)-alpha-D-glucosamine + phosphate</text>
        <dbReference type="Rhea" id="RHEA:18681"/>
        <dbReference type="ChEBI" id="CHEBI:43474"/>
        <dbReference type="ChEBI" id="CHEBI:57705"/>
        <dbReference type="ChEBI" id="CHEBI:58702"/>
        <dbReference type="ChEBI" id="CHEBI:68483"/>
        <dbReference type="EC" id="2.5.1.7"/>
    </reaction>
</comment>
<comment type="pathway">
    <text evidence="1">Cell wall biogenesis; peptidoglycan biosynthesis.</text>
</comment>
<comment type="subcellular location">
    <subcellularLocation>
        <location evidence="1">Cytoplasm</location>
    </subcellularLocation>
</comment>
<comment type="similarity">
    <text evidence="1">Belongs to the EPSP synthase family. MurA subfamily.</text>
</comment>
<name>MURA_SYNFM</name>
<gene>
    <name evidence="1" type="primary">murA</name>
    <name type="ordered locus">Sfum_1715</name>
</gene>
<keyword id="KW-0131">Cell cycle</keyword>
<keyword id="KW-0132">Cell division</keyword>
<keyword id="KW-0133">Cell shape</keyword>
<keyword id="KW-0961">Cell wall biogenesis/degradation</keyword>
<keyword id="KW-0963">Cytoplasm</keyword>
<keyword id="KW-0573">Peptidoglycan synthesis</keyword>
<keyword id="KW-0670">Pyruvate</keyword>
<keyword id="KW-1185">Reference proteome</keyword>
<keyword id="KW-0808">Transferase</keyword>
<proteinExistence type="inferred from homology"/>
<reference key="1">
    <citation type="submission" date="2006-10" db="EMBL/GenBank/DDBJ databases">
        <title>Complete sequence of Syntrophobacter fumaroxidans MPOB.</title>
        <authorList>
            <consortium name="US DOE Joint Genome Institute"/>
            <person name="Copeland A."/>
            <person name="Lucas S."/>
            <person name="Lapidus A."/>
            <person name="Barry K."/>
            <person name="Detter J.C."/>
            <person name="Glavina del Rio T."/>
            <person name="Hammon N."/>
            <person name="Israni S."/>
            <person name="Pitluck S."/>
            <person name="Goltsman E.G."/>
            <person name="Martinez M."/>
            <person name="Schmutz J."/>
            <person name="Larimer F."/>
            <person name="Land M."/>
            <person name="Hauser L."/>
            <person name="Kyrpides N."/>
            <person name="Kim E."/>
            <person name="Boone D.R."/>
            <person name="Brockman F."/>
            <person name="Culley D."/>
            <person name="Ferry J."/>
            <person name="Gunsalus R."/>
            <person name="McInerney M.J."/>
            <person name="Morrison M."/>
            <person name="Plugge C."/>
            <person name="Rohlin L."/>
            <person name="Scholten J."/>
            <person name="Sieber J."/>
            <person name="Stams A.J.M."/>
            <person name="Worm P."/>
            <person name="Henstra A.M."/>
            <person name="Richardson P."/>
        </authorList>
    </citation>
    <scope>NUCLEOTIDE SEQUENCE [LARGE SCALE GENOMIC DNA]</scope>
    <source>
        <strain>DSM 10017 / MPOB</strain>
    </source>
</reference>
<sequence>MDKLVIEGGVPLRGEVSISGAKNAALPLMAASLLACGKHSFTNVPRLRDIHTMCNLLGHMGASSEHGATLNIDSGNIRALEAPYRLVKTMRASVLVLGPMLARHGFARVSLPGGCAIGARPINLHLSGLQEMGADIELEHGYVVARADRLRGATIIFDLVTVTGTENLMMAATLARGRTILKNTAREPEVVALADYLRKMGARIEGDGSSEIVVDGVEELTPSTFRVIPDRIEAGTYIAAAGITGGCLRLTNCEPAHLEAVIQKLRAAGLTIETGEGIVDVQSNGPIRSVDIKTWPYPAFPTDMQAQFMSLMTLGNGVSLITEQIFENRFMHVLELKRLGADIELDGRNARVCGVSHLSGAPVMATDLRASASLVLAALAATGVTEITRIYHLERGYEDMDGKLSAVGARIRRQVNGS</sequence>
<organism>
    <name type="scientific">Syntrophobacter fumaroxidans (strain DSM 10017 / MPOB)</name>
    <dbReference type="NCBI Taxonomy" id="335543"/>
    <lineage>
        <taxon>Bacteria</taxon>
        <taxon>Pseudomonadati</taxon>
        <taxon>Thermodesulfobacteriota</taxon>
        <taxon>Syntrophobacteria</taxon>
        <taxon>Syntrophobacterales</taxon>
        <taxon>Syntrophobacteraceae</taxon>
        <taxon>Syntrophobacter</taxon>
    </lineage>
</organism>
<feature type="chain" id="PRO_1000023116" description="UDP-N-acetylglucosamine 1-carboxyvinyltransferase">
    <location>
        <begin position="1"/>
        <end position="418"/>
    </location>
</feature>
<feature type="active site" description="Proton donor" evidence="1">
    <location>
        <position position="115"/>
    </location>
</feature>
<feature type="binding site" evidence="1">
    <location>
        <begin position="22"/>
        <end position="23"/>
    </location>
    <ligand>
        <name>phosphoenolpyruvate</name>
        <dbReference type="ChEBI" id="CHEBI:58702"/>
    </ligand>
</feature>
<feature type="binding site" evidence="1">
    <location>
        <position position="91"/>
    </location>
    <ligand>
        <name>UDP-N-acetyl-alpha-D-glucosamine</name>
        <dbReference type="ChEBI" id="CHEBI:57705"/>
    </ligand>
</feature>
<feature type="binding site" evidence="1">
    <location>
        <position position="303"/>
    </location>
    <ligand>
        <name>UDP-N-acetyl-alpha-D-glucosamine</name>
        <dbReference type="ChEBI" id="CHEBI:57705"/>
    </ligand>
</feature>
<feature type="binding site" evidence="1">
    <location>
        <position position="325"/>
    </location>
    <ligand>
        <name>UDP-N-acetyl-alpha-D-glucosamine</name>
        <dbReference type="ChEBI" id="CHEBI:57705"/>
    </ligand>
</feature>
<feature type="modified residue" description="2-(S-cysteinyl)pyruvic acid O-phosphothioketal" evidence="1">
    <location>
        <position position="115"/>
    </location>
</feature>
<protein>
    <recommendedName>
        <fullName evidence="1">UDP-N-acetylglucosamine 1-carboxyvinyltransferase</fullName>
        <ecNumber evidence="1">2.5.1.7</ecNumber>
    </recommendedName>
    <alternativeName>
        <fullName evidence="1">Enoylpyruvate transferase</fullName>
    </alternativeName>
    <alternativeName>
        <fullName evidence="1">UDP-N-acetylglucosamine enolpyruvyl transferase</fullName>
        <shortName evidence="1">EPT</shortName>
    </alternativeName>
</protein>